<keyword id="KW-0067">ATP-binding</keyword>
<keyword id="KW-0173">Coenzyme A biosynthesis</keyword>
<keyword id="KW-0963">Cytoplasm</keyword>
<keyword id="KW-0460">Magnesium</keyword>
<keyword id="KW-0547">Nucleotide-binding</keyword>
<keyword id="KW-0548">Nucleotidyltransferase</keyword>
<keyword id="KW-1185">Reference proteome</keyword>
<keyword id="KW-0808">Transferase</keyword>
<gene>
    <name evidence="1" type="primary">coaD</name>
    <name type="ordered locus">VF_0132</name>
</gene>
<sequence>MTKLTLYPGTFDPITNGHLDLIKRSASMFDHIIVAVAASPSKKTLFTLDERVQLVQAVTKDLPNVYVEGFSGLMVDFAKEKKANLLVRGLRTTMDFEYEFGLTSMYRKLMPELESVFLTPSEEYAFLSSTIVREVALHGGSVEAFVPSSVNQALKNKVASSL</sequence>
<dbReference type="EC" id="2.7.7.3" evidence="1"/>
<dbReference type="EMBL" id="CP000020">
    <property type="protein sequence ID" value="AAW84627.1"/>
    <property type="molecule type" value="Genomic_DNA"/>
</dbReference>
<dbReference type="RefSeq" id="WP_011260992.1">
    <property type="nucleotide sequence ID" value="NC_006840.2"/>
</dbReference>
<dbReference type="RefSeq" id="YP_203515.1">
    <property type="nucleotide sequence ID" value="NC_006840.2"/>
</dbReference>
<dbReference type="SMR" id="Q5E8L9"/>
<dbReference type="STRING" id="312309.VF_0132"/>
<dbReference type="EnsemblBacteria" id="AAW84627">
    <property type="protein sequence ID" value="AAW84627"/>
    <property type="gene ID" value="VF_0132"/>
</dbReference>
<dbReference type="GeneID" id="54162758"/>
<dbReference type="KEGG" id="vfi:VF_0132"/>
<dbReference type="PATRIC" id="fig|312309.11.peg.131"/>
<dbReference type="eggNOG" id="COG0669">
    <property type="taxonomic scope" value="Bacteria"/>
</dbReference>
<dbReference type="HOGENOM" id="CLU_100149_0_1_6"/>
<dbReference type="OrthoDB" id="9806661at2"/>
<dbReference type="UniPathway" id="UPA00241">
    <property type="reaction ID" value="UER00355"/>
</dbReference>
<dbReference type="Proteomes" id="UP000000537">
    <property type="component" value="Chromosome I"/>
</dbReference>
<dbReference type="GO" id="GO:0005737">
    <property type="term" value="C:cytoplasm"/>
    <property type="evidence" value="ECO:0007669"/>
    <property type="project" value="UniProtKB-SubCell"/>
</dbReference>
<dbReference type="GO" id="GO:0005524">
    <property type="term" value="F:ATP binding"/>
    <property type="evidence" value="ECO:0007669"/>
    <property type="project" value="UniProtKB-KW"/>
</dbReference>
<dbReference type="GO" id="GO:0004595">
    <property type="term" value="F:pantetheine-phosphate adenylyltransferase activity"/>
    <property type="evidence" value="ECO:0007669"/>
    <property type="project" value="UniProtKB-UniRule"/>
</dbReference>
<dbReference type="GO" id="GO:0015937">
    <property type="term" value="P:coenzyme A biosynthetic process"/>
    <property type="evidence" value="ECO:0007669"/>
    <property type="project" value="UniProtKB-UniRule"/>
</dbReference>
<dbReference type="CDD" id="cd02163">
    <property type="entry name" value="PPAT"/>
    <property type="match status" value="1"/>
</dbReference>
<dbReference type="FunFam" id="3.40.50.620:FF:000012">
    <property type="entry name" value="Phosphopantetheine adenylyltransferase"/>
    <property type="match status" value="1"/>
</dbReference>
<dbReference type="Gene3D" id="3.40.50.620">
    <property type="entry name" value="HUPs"/>
    <property type="match status" value="1"/>
</dbReference>
<dbReference type="HAMAP" id="MF_00151">
    <property type="entry name" value="PPAT_bact"/>
    <property type="match status" value="1"/>
</dbReference>
<dbReference type="InterPro" id="IPR004821">
    <property type="entry name" value="Cyt_trans-like"/>
</dbReference>
<dbReference type="InterPro" id="IPR001980">
    <property type="entry name" value="PPAT"/>
</dbReference>
<dbReference type="InterPro" id="IPR014729">
    <property type="entry name" value="Rossmann-like_a/b/a_fold"/>
</dbReference>
<dbReference type="NCBIfam" id="TIGR01510">
    <property type="entry name" value="coaD_prev_kdtB"/>
    <property type="match status" value="1"/>
</dbReference>
<dbReference type="NCBIfam" id="TIGR00125">
    <property type="entry name" value="cyt_tran_rel"/>
    <property type="match status" value="1"/>
</dbReference>
<dbReference type="PANTHER" id="PTHR21342">
    <property type="entry name" value="PHOSPHOPANTETHEINE ADENYLYLTRANSFERASE"/>
    <property type="match status" value="1"/>
</dbReference>
<dbReference type="PANTHER" id="PTHR21342:SF1">
    <property type="entry name" value="PHOSPHOPANTETHEINE ADENYLYLTRANSFERASE"/>
    <property type="match status" value="1"/>
</dbReference>
<dbReference type="Pfam" id="PF01467">
    <property type="entry name" value="CTP_transf_like"/>
    <property type="match status" value="1"/>
</dbReference>
<dbReference type="PRINTS" id="PR01020">
    <property type="entry name" value="LPSBIOSNTHSS"/>
</dbReference>
<dbReference type="SUPFAM" id="SSF52374">
    <property type="entry name" value="Nucleotidylyl transferase"/>
    <property type="match status" value="1"/>
</dbReference>
<feature type="chain" id="PRO_0000156304" description="Phosphopantetheine adenylyltransferase">
    <location>
        <begin position="1"/>
        <end position="162"/>
    </location>
</feature>
<feature type="binding site" evidence="1">
    <location>
        <begin position="10"/>
        <end position="11"/>
    </location>
    <ligand>
        <name>ATP</name>
        <dbReference type="ChEBI" id="CHEBI:30616"/>
    </ligand>
</feature>
<feature type="binding site" evidence="1">
    <location>
        <position position="10"/>
    </location>
    <ligand>
        <name>substrate</name>
    </ligand>
</feature>
<feature type="binding site" evidence="1">
    <location>
        <position position="18"/>
    </location>
    <ligand>
        <name>ATP</name>
        <dbReference type="ChEBI" id="CHEBI:30616"/>
    </ligand>
</feature>
<feature type="binding site" evidence="1">
    <location>
        <position position="42"/>
    </location>
    <ligand>
        <name>substrate</name>
    </ligand>
</feature>
<feature type="binding site" evidence="1">
    <location>
        <position position="74"/>
    </location>
    <ligand>
        <name>substrate</name>
    </ligand>
</feature>
<feature type="binding site" evidence="1">
    <location>
        <position position="88"/>
    </location>
    <ligand>
        <name>substrate</name>
    </ligand>
</feature>
<feature type="binding site" evidence="1">
    <location>
        <begin position="89"/>
        <end position="91"/>
    </location>
    <ligand>
        <name>ATP</name>
        <dbReference type="ChEBI" id="CHEBI:30616"/>
    </ligand>
</feature>
<feature type="binding site" evidence="1">
    <location>
        <position position="99"/>
    </location>
    <ligand>
        <name>ATP</name>
        <dbReference type="ChEBI" id="CHEBI:30616"/>
    </ligand>
</feature>
<feature type="binding site" evidence="1">
    <location>
        <begin position="124"/>
        <end position="130"/>
    </location>
    <ligand>
        <name>ATP</name>
        <dbReference type="ChEBI" id="CHEBI:30616"/>
    </ligand>
</feature>
<feature type="site" description="Transition state stabilizer" evidence="1">
    <location>
        <position position="18"/>
    </location>
</feature>
<evidence type="ECO:0000255" key="1">
    <source>
        <dbReference type="HAMAP-Rule" id="MF_00151"/>
    </source>
</evidence>
<proteinExistence type="inferred from homology"/>
<accession>Q5E8L9</accession>
<organism>
    <name type="scientific">Aliivibrio fischeri (strain ATCC 700601 / ES114)</name>
    <name type="common">Vibrio fischeri</name>
    <dbReference type="NCBI Taxonomy" id="312309"/>
    <lineage>
        <taxon>Bacteria</taxon>
        <taxon>Pseudomonadati</taxon>
        <taxon>Pseudomonadota</taxon>
        <taxon>Gammaproteobacteria</taxon>
        <taxon>Vibrionales</taxon>
        <taxon>Vibrionaceae</taxon>
        <taxon>Aliivibrio</taxon>
    </lineage>
</organism>
<comment type="function">
    <text evidence="1">Reversibly transfers an adenylyl group from ATP to 4'-phosphopantetheine, yielding dephospho-CoA (dPCoA) and pyrophosphate.</text>
</comment>
<comment type="catalytic activity">
    <reaction evidence="1">
        <text>(R)-4'-phosphopantetheine + ATP + H(+) = 3'-dephospho-CoA + diphosphate</text>
        <dbReference type="Rhea" id="RHEA:19801"/>
        <dbReference type="ChEBI" id="CHEBI:15378"/>
        <dbReference type="ChEBI" id="CHEBI:30616"/>
        <dbReference type="ChEBI" id="CHEBI:33019"/>
        <dbReference type="ChEBI" id="CHEBI:57328"/>
        <dbReference type="ChEBI" id="CHEBI:61723"/>
        <dbReference type="EC" id="2.7.7.3"/>
    </reaction>
</comment>
<comment type="cofactor">
    <cofactor evidence="1">
        <name>Mg(2+)</name>
        <dbReference type="ChEBI" id="CHEBI:18420"/>
    </cofactor>
</comment>
<comment type="pathway">
    <text evidence="1">Cofactor biosynthesis; coenzyme A biosynthesis; CoA from (R)-pantothenate: step 4/5.</text>
</comment>
<comment type="subunit">
    <text evidence="1">Homohexamer.</text>
</comment>
<comment type="subcellular location">
    <subcellularLocation>
        <location evidence="1">Cytoplasm</location>
    </subcellularLocation>
</comment>
<comment type="similarity">
    <text evidence="1">Belongs to the bacterial CoaD family.</text>
</comment>
<name>COAD_ALIF1</name>
<reference key="1">
    <citation type="journal article" date="2005" name="Proc. Natl. Acad. Sci. U.S.A.">
        <title>Complete genome sequence of Vibrio fischeri: a symbiotic bacterium with pathogenic congeners.</title>
        <authorList>
            <person name="Ruby E.G."/>
            <person name="Urbanowski M."/>
            <person name="Campbell J."/>
            <person name="Dunn A."/>
            <person name="Faini M."/>
            <person name="Gunsalus R."/>
            <person name="Lostroh P."/>
            <person name="Lupp C."/>
            <person name="McCann J."/>
            <person name="Millikan D."/>
            <person name="Schaefer A."/>
            <person name="Stabb E."/>
            <person name="Stevens A."/>
            <person name="Visick K."/>
            <person name="Whistler C."/>
            <person name="Greenberg E.P."/>
        </authorList>
    </citation>
    <scope>NUCLEOTIDE SEQUENCE [LARGE SCALE GENOMIC DNA]</scope>
    <source>
        <strain>ATCC 700601 / ES114</strain>
    </source>
</reference>
<protein>
    <recommendedName>
        <fullName evidence="1">Phosphopantetheine adenylyltransferase</fullName>
        <ecNumber evidence="1">2.7.7.3</ecNumber>
    </recommendedName>
    <alternativeName>
        <fullName evidence="1">Dephospho-CoA pyrophosphorylase</fullName>
    </alternativeName>
    <alternativeName>
        <fullName evidence="1">Pantetheine-phosphate adenylyltransferase</fullName>
        <shortName evidence="1">PPAT</shortName>
    </alternativeName>
</protein>